<evidence type="ECO:0000256" key="1">
    <source>
        <dbReference type="SAM" id="MobiDB-lite"/>
    </source>
</evidence>
<evidence type="ECO:0000269" key="2">
    <source>
    </source>
</evidence>
<evidence type="ECO:0000269" key="3">
    <source>
    </source>
</evidence>
<evidence type="ECO:0000269" key="4">
    <source>
    </source>
</evidence>
<evidence type="ECO:0000269" key="5">
    <source>
    </source>
</evidence>
<evidence type="ECO:0000269" key="6">
    <source>
    </source>
</evidence>
<evidence type="ECO:0000269" key="7">
    <source>
    </source>
</evidence>
<evidence type="ECO:0000269" key="8">
    <source>
    </source>
</evidence>
<evidence type="ECO:0000269" key="9">
    <source>
    </source>
</evidence>
<evidence type="ECO:0000269" key="10">
    <source>
    </source>
</evidence>
<evidence type="ECO:0000269" key="11">
    <source>
    </source>
</evidence>
<evidence type="ECO:0000305" key="12"/>
<evidence type="ECO:0007744" key="13">
    <source>
    </source>
</evidence>
<accession>P40186</accession>
<accession>D6VVN1</accession>
<keyword id="KW-0119">Carbohydrate metabolism</keyword>
<keyword id="KW-0131">Cell cycle</keyword>
<keyword id="KW-0132">Cell division</keyword>
<keyword id="KW-0195">Cyclin</keyword>
<keyword id="KW-0963">Cytoplasm</keyword>
<keyword id="KW-0903">Direct protein sequencing</keyword>
<keyword id="KW-0321">Glycogen metabolism</keyword>
<keyword id="KW-0597">Phosphoprotein</keyword>
<keyword id="KW-1185">Reference proteome</keyword>
<organism>
    <name type="scientific">Saccharomyces cerevisiae (strain ATCC 204508 / S288c)</name>
    <name type="common">Baker's yeast</name>
    <dbReference type="NCBI Taxonomy" id="559292"/>
    <lineage>
        <taxon>Eukaryota</taxon>
        <taxon>Fungi</taxon>
        <taxon>Dikarya</taxon>
        <taxon>Ascomycota</taxon>
        <taxon>Saccharomycotina</taxon>
        <taxon>Saccharomycetes</taxon>
        <taxon>Saccharomycetales</taxon>
        <taxon>Saccharomycetaceae</taxon>
        <taxon>Saccharomyces</taxon>
    </lineage>
</organism>
<protein>
    <recommendedName>
        <fullName>PHO85 cyclin-7</fullName>
    </recommendedName>
    <alternativeName>
        <fullName>PHO85-associated protein 1</fullName>
    </alternativeName>
</protein>
<dbReference type="EMBL" id="Z38060">
    <property type="protein sequence ID" value="CAA86172.1"/>
    <property type="molecule type" value="Genomic_DNA"/>
</dbReference>
<dbReference type="EMBL" id="BK006942">
    <property type="protein sequence ID" value="DAA08497.1"/>
    <property type="molecule type" value="Genomic_DNA"/>
</dbReference>
<dbReference type="PIR" id="S48429">
    <property type="entry name" value="S48429"/>
</dbReference>
<dbReference type="RefSeq" id="NP_012214.3">
    <property type="nucleotide sequence ID" value="NM_001179400.3"/>
</dbReference>
<dbReference type="SMR" id="P40186"/>
<dbReference type="BioGRID" id="34940">
    <property type="interactions" value="65"/>
</dbReference>
<dbReference type="ComplexPortal" id="CPX-1690">
    <property type="entry name" value="PCL7-PHO85 kinase complex"/>
</dbReference>
<dbReference type="DIP" id="DIP-1508N"/>
<dbReference type="FunCoup" id="P40186">
    <property type="interactions" value="222"/>
</dbReference>
<dbReference type="IntAct" id="P40186">
    <property type="interactions" value="5"/>
</dbReference>
<dbReference type="MINT" id="P40186"/>
<dbReference type="STRING" id="4932.YIL050W"/>
<dbReference type="iPTMnet" id="P40186"/>
<dbReference type="PaxDb" id="4932-YIL050W"/>
<dbReference type="PeptideAtlas" id="P40186"/>
<dbReference type="EnsemblFungi" id="YIL050W_mRNA">
    <property type="protein sequence ID" value="YIL050W"/>
    <property type="gene ID" value="YIL050W"/>
</dbReference>
<dbReference type="GeneID" id="854761"/>
<dbReference type="KEGG" id="sce:YIL050W"/>
<dbReference type="AGR" id="SGD:S000001312"/>
<dbReference type="SGD" id="S000001312">
    <property type="gene designation" value="PCL7"/>
</dbReference>
<dbReference type="VEuPathDB" id="FungiDB:YIL050W"/>
<dbReference type="eggNOG" id="KOG1674">
    <property type="taxonomic scope" value="Eukaryota"/>
</dbReference>
<dbReference type="GeneTree" id="ENSGT00390000000862"/>
<dbReference type="HOGENOM" id="CLU_074159_0_0_1"/>
<dbReference type="InParanoid" id="P40186"/>
<dbReference type="OMA" id="CFKEDES"/>
<dbReference type="OrthoDB" id="1060854at2759"/>
<dbReference type="BioCyc" id="YEAST:G3O-31321-MONOMER"/>
<dbReference type="BioGRID-ORCS" id="854761">
    <property type="hits" value="0 hits in 10 CRISPR screens"/>
</dbReference>
<dbReference type="PRO" id="PR:P40186"/>
<dbReference type="Proteomes" id="UP000002311">
    <property type="component" value="Chromosome IX"/>
</dbReference>
<dbReference type="RNAct" id="P40186">
    <property type="molecule type" value="protein"/>
</dbReference>
<dbReference type="GO" id="GO:0000307">
    <property type="term" value="C:cyclin-dependent protein kinase holoenzyme complex"/>
    <property type="evidence" value="ECO:0000353"/>
    <property type="project" value="SGD"/>
</dbReference>
<dbReference type="GO" id="GO:0005737">
    <property type="term" value="C:cytoplasm"/>
    <property type="evidence" value="ECO:0007669"/>
    <property type="project" value="UniProtKB-SubCell"/>
</dbReference>
<dbReference type="GO" id="GO:0005634">
    <property type="term" value="C:nucleus"/>
    <property type="evidence" value="ECO:0000314"/>
    <property type="project" value="SGD"/>
</dbReference>
<dbReference type="GO" id="GO:0016538">
    <property type="term" value="F:cyclin-dependent protein serine/threonine kinase regulator activity"/>
    <property type="evidence" value="ECO:0000314"/>
    <property type="project" value="SGD"/>
</dbReference>
<dbReference type="GO" id="GO:0019901">
    <property type="term" value="F:protein kinase binding"/>
    <property type="evidence" value="ECO:0007669"/>
    <property type="project" value="InterPro"/>
</dbReference>
<dbReference type="GO" id="GO:0051301">
    <property type="term" value="P:cell division"/>
    <property type="evidence" value="ECO:0007669"/>
    <property type="project" value="UniProtKB-KW"/>
</dbReference>
<dbReference type="GO" id="GO:0005977">
    <property type="term" value="P:glycogen metabolic process"/>
    <property type="evidence" value="ECO:0007669"/>
    <property type="project" value="UniProtKB-KW"/>
</dbReference>
<dbReference type="GO" id="GO:0005979">
    <property type="term" value="P:regulation of glycogen biosynthetic process"/>
    <property type="evidence" value="ECO:0000316"/>
    <property type="project" value="SGD"/>
</dbReference>
<dbReference type="GO" id="GO:0005981">
    <property type="term" value="P:regulation of glycogen catabolic process"/>
    <property type="evidence" value="ECO:0000316"/>
    <property type="project" value="SGD"/>
</dbReference>
<dbReference type="GO" id="GO:0031647">
    <property type="term" value="P:regulation of protein stability"/>
    <property type="evidence" value="ECO:0000315"/>
    <property type="project" value="SGD"/>
</dbReference>
<dbReference type="CDD" id="cd20558">
    <property type="entry name" value="CYCLIN_ScPCL7-like"/>
    <property type="match status" value="1"/>
</dbReference>
<dbReference type="FunFam" id="1.10.472.10:FF:000097">
    <property type="entry name" value="Pho85 cyclin"/>
    <property type="match status" value="1"/>
</dbReference>
<dbReference type="Gene3D" id="1.10.472.10">
    <property type="entry name" value="Cyclin-like"/>
    <property type="match status" value="1"/>
</dbReference>
<dbReference type="InterPro" id="IPR013922">
    <property type="entry name" value="Cyclin_PHO80-like"/>
</dbReference>
<dbReference type="PANTHER" id="PTHR15615">
    <property type="match status" value="1"/>
</dbReference>
<dbReference type="PANTHER" id="PTHR15615:SF94">
    <property type="entry name" value="PHO85 CYCLIN-6-RELATED"/>
    <property type="match status" value="1"/>
</dbReference>
<dbReference type="Pfam" id="PF08613">
    <property type="entry name" value="Cyclin"/>
    <property type="match status" value="1"/>
</dbReference>
<reference key="1">
    <citation type="journal article" date="1997" name="Nature">
        <title>The nucleotide sequence of Saccharomyces cerevisiae chromosome IX.</title>
        <authorList>
            <person name="Churcher C.M."/>
            <person name="Bowman S."/>
            <person name="Badcock K."/>
            <person name="Bankier A.T."/>
            <person name="Brown D."/>
            <person name="Chillingworth T."/>
            <person name="Connor R."/>
            <person name="Devlin K."/>
            <person name="Gentles S."/>
            <person name="Hamlin N."/>
            <person name="Harris D.E."/>
            <person name="Horsnell T."/>
            <person name="Hunt S."/>
            <person name="Jagels K."/>
            <person name="Jones M."/>
            <person name="Lye G."/>
            <person name="Moule S."/>
            <person name="Odell C."/>
            <person name="Pearson D."/>
            <person name="Rajandream M.A."/>
            <person name="Rice P."/>
            <person name="Rowley N."/>
            <person name="Skelton J."/>
            <person name="Smith V."/>
            <person name="Walsh S.V."/>
            <person name="Whitehead S."/>
            <person name="Barrell B.G."/>
        </authorList>
    </citation>
    <scope>NUCLEOTIDE SEQUENCE [LARGE SCALE GENOMIC DNA]</scope>
    <source>
        <strain>ATCC 204508 / S288c</strain>
    </source>
</reference>
<reference key="2">
    <citation type="journal article" date="2014" name="G3 (Bethesda)">
        <title>The reference genome sequence of Saccharomyces cerevisiae: Then and now.</title>
        <authorList>
            <person name="Engel S.R."/>
            <person name="Dietrich F.S."/>
            <person name="Fisk D.G."/>
            <person name="Binkley G."/>
            <person name="Balakrishnan R."/>
            <person name="Costanzo M.C."/>
            <person name="Dwight S.S."/>
            <person name="Hitz B.C."/>
            <person name="Karra K."/>
            <person name="Nash R.S."/>
            <person name="Weng S."/>
            <person name="Wong E.D."/>
            <person name="Lloyd P."/>
            <person name="Skrzypek M.S."/>
            <person name="Miyasato S.R."/>
            <person name="Simison M."/>
            <person name="Cherry J.M."/>
        </authorList>
    </citation>
    <scope>GENOME REANNOTATION</scope>
    <source>
        <strain>ATCC 204508 / S288c</strain>
    </source>
</reference>
<reference key="3">
    <citation type="journal article" date="1998" name="Sheng Wu Hua Xue Yu Sheng Wu Wu Li Xue Bao">
        <title>Cloning and expression of a novel PHO85 associated protein PAP1 gene of Saccharomyces cerevisiae.</title>
        <authorList>
            <person name="Wu J.S."/>
            <person name="Xia Z.X."/>
            <person name="Cao Z."/>
            <person name="Ao S.Z."/>
        </authorList>
    </citation>
    <scope>PROTEIN SEQUENCE OF 2-11</scope>
    <scope>INTERACTION WITH PHO85</scope>
</reference>
<reference key="4">
    <citation type="journal article" date="1997" name="Mol. Cell. Biol.">
        <title>A family of cyclin-like proteins that interact with the Pho85 cyclin-dependent kinase.</title>
        <authorList>
            <person name="Measday V."/>
            <person name="Moore L."/>
            <person name="Retnakaran R."/>
            <person name="Lee J."/>
            <person name="Donoviel M."/>
            <person name="Neiman A.M."/>
            <person name="Andrews B.J."/>
        </authorList>
    </citation>
    <scope>INTERACTION WITH PHO85</scope>
</reference>
<reference key="5">
    <citation type="journal article" date="2000" name="Mol. Microbiol.">
        <title>Regulation of the Pcl7-Pho85 cyclin-cdk complex by Pho81.</title>
        <authorList>
            <person name="Lee M."/>
            <person name="O'Regan S."/>
            <person name="Moreau J.-L."/>
            <person name="Johnson A.L."/>
            <person name="Johnston L.H."/>
            <person name="Goding C.R."/>
        </authorList>
    </citation>
    <scope>FUNCTION</scope>
    <scope>INTERACTION WITH PHO81 AND PHO85</scope>
    <scope>ACTIVITY REGULATION</scope>
    <scope>INDUCTION</scope>
</reference>
<reference key="6">
    <citation type="journal article" date="2001" name="FEBS Lett.">
        <title>The yeast cyclins Pcl6p and Pcl7p are involved in the control of glycogen storage by the cyclin-dependent protein kinase Pho85p.</title>
        <authorList>
            <person name="Wang Z."/>
            <person name="Wilson W.A."/>
            <person name="Fujino M.A."/>
            <person name="Roach P.J."/>
        </authorList>
    </citation>
    <scope>FUNCTION</scope>
</reference>
<reference key="7">
    <citation type="journal article" date="2002" name="Sheng Wu Hua Xue Yu Sheng Wu Wu Li Xue Bao">
        <title>Phosphorylation of YLR190w by PAP1 PHO85 kinase complex.</title>
        <authorList>
            <person name="Shi X.Z."/>
            <person name="Ao S.Z."/>
        </authorList>
    </citation>
    <scope>FUNCTION</scope>
    <scope>INTERACTION WITH MMR1</scope>
    <scope>PHOSPHORYLATION OF MMR1</scope>
</reference>
<reference key="8">
    <citation type="journal article" date="2002" name="Sheng Wu Hua Xue Yu Sheng Wu Wu Li Xue Bao">
        <title>Analysis of phosphorylation of YJL084c, a yeast protein.</title>
        <authorList>
            <person name="Shi X.Z."/>
            <person name="Ao S.Z."/>
        </authorList>
    </citation>
    <scope>FUNCTION</scope>
    <scope>INTERACTION WITH YJL084C</scope>
    <scope>PHOSPHORYLATION OF YJL084C</scope>
</reference>
<reference key="9">
    <citation type="journal article" date="2003" name="J. Biol. Chem.">
        <title>Pho85 phosphorylates the Glc7 protein phosphatase regulator Glc8 in vivo.</title>
        <authorList>
            <person name="Tan Y.S.H."/>
            <person name="Morcos P.A."/>
            <person name="Cannon J.F."/>
        </authorList>
    </citation>
    <scope>FUNCTION</scope>
    <scope>PHOSPHORYLATION OF GLC8</scope>
</reference>
<reference key="10">
    <citation type="journal article" date="2003" name="Nature">
        <title>Global analysis of protein localization in budding yeast.</title>
        <authorList>
            <person name="Huh W.-K."/>
            <person name="Falvo J.V."/>
            <person name="Gerke L.C."/>
            <person name="Carroll A.S."/>
            <person name="Howson R.W."/>
            <person name="Weissman J.S."/>
            <person name="O'Shea E.K."/>
        </authorList>
    </citation>
    <scope>SUBCELLULAR LOCATION [LARGE SCALE ANALYSIS]</scope>
</reference>
<reference key="11">
    <citation type="journal article" date="2003" name="Nature">
        <title>Global analysis of protein expression in yeast.</title>
        <authorList>
            <person name="Ghaemmaghami S."/>
            <person name="Huh W.-K."/>
            <person name="Bower K."/>
            <person name="Howson R.W."/>
            <person name="Belle A."/>
            <person name="Dephoure N."/>
            <person name="O'Shea E.K."/>
            <person name="Weissman J.S."/>
        </authorList>
    </citation>
    <scope>LEVEL OF PROTEIN EXPRESSION [LARGE SCALE ANALYSIS]</scope>
</reference>
<reference key="12">
    <citation type="journal article" date="2005" name="Biochem. Biophys. Res. Commun.">
        <title>Regulation of yeast glycogen phosphorylase by the cyclin-dependent protein kinase Pho85p.</title>
        <authorList>
            <person name="Wilson W.A."/>
            <person name="Wang Z."/>
            <person name="Roach P.J."/>
        </authorList>
    </citation>
    <scope>FUNCTION</scope>
</reference>
<reference key="13">
    <citation type="journal article" date="2008" name="Mol. Cell. Proteomics">
        <title>A multidimensional chromatography technology for in-depth phosphoproteome analysis.</title>
        <authorList>
            <person name="Albuquerque C.P."/>
            <person name="Smolka M.B."/>
            <person name="Payne S.H."/>
            <person name="Bafna V."/>
            <person name="Eng J."/>
            <person name="Zhou H."/>
        </authorList>
    </citation>
    <scope>PHOSPHORYLATION [LARGE SCALE ANALYSIS] AT SER-69</scope>
    <scope>IDENTIFICATION BY MASS SPECTROMETRY [LARGE SCALE ANALYSIS]</scope>
</reference>
<feature type="initiator methionine" description="Removed" evidence="6">
    <location>
        <position position="1"/>
    </location>
</feature>
<feature type="chain" id="PRO_0000202991" description="PHO85 cyclin-7">
    <location>
        <begin position="2"/>
        <end position="285"/>
    </location>
</feature>
<feature type="region of interest" description="Disordered" evidence="1">
    <location>
        <begin position="1"/>
        <end position="42"/>
    </location>
</feature>
<feature type="compositionally biased region" description="Low complexity" evidence="1">
    <location>
        <begin position="1"/>
        <end position="14"/>
    </location>
</feature>
<feature type="modified residue" description="Phosphoserine" evidence="13">
    <location>
        <position position="69"/>
    </location>
</feature>
<proteinExistence type="evidence at protein level"/>
<name>PCL7_YEAST</name>
<gene>
    <name type="primary">PCL7</name>
    <name type="synonym">PAP1</name>
    <name type="ordered locus">YIL050W</name>
</gene>
<comment type="function">
    <text evidence="2 3 4 5 7 10">Cyclin partner of the cyclin-dependent kinase (CDK) PHO85. Together with cyclin PCL6, controls glycogen phosphorylase and glycogen synthase activities in response to nutrient availablility. The PCL7-PHO85 cyclin-CDK holoenzyme has GLC8 kinase activity and phosphorylates and inactivates the phosphatase PP1-2 inhibitor GLC8, causing activation of PP1-2, which then dephosphorylates and activates glycogen phosphorylase. PCL7-PHO85 also phosphorylates MMR1 and YJL084C.</text>
</comment>
<comment type="activity regulation">
    <text evidence="2">The PCL7-PHO85 cyclin-CDK is inhibited by PHO81 in low-phosphate conditions.</text>
</comment>
<comment type="subunit">
    <text evidence="2 4 5 6 11">Forms a cyclin-CDK complex with PHO85. Interacts with the substrate proteins MMR1 and YJL084C. Interacts with the CDK inhibitor (CKI) PHO81.</text>
</comment>
<comment type="interaction">
    <interactant intactId="EBI-25021">
        <id>P40186</id>
    </interactant>
    <interactant intactId="EBI-13327">
        <id>P17157</id>
        <label>PHO85</label>
    </interactant>
    <organismsDiffer>false</organismsDiffer>
    <experiments>9</experiments>
</comment>
<comment type="subcellular location">
    <subcellularLocation>
        <location evidence="8">Cytoplasm</location>
    </subcellularLocation>
</comment>
<comment type="induction">
    <text evidence="2">Cell cycle regulated, with a peak in mid to late S phase.</text>
</comment>
<comment type="miscellaneous">
    <text evidence="9">Present with 3390 molecules/cell in log phase SD medium.</text>
</comment>
<comment type="similarity">
    <text evidence="12">Belongs to the cyclin family. PHO80 subfamily.</text>
</comment>
<sequence>MELSSPSKKTTTSPINIPGGNRDNLIIGPHSHSFKTDPFSSNNSSLLSKISTNPSLESPFSSKSLLDCSPVQAVKKSLESEAKTHSLDEETNEQTDVKILNIADFPTDELILMISALLNRIITANDETTDVSQQVSDETEDELLTPILAFYGKNVPEIAVVQYLERIQKYCPTTNDIFLSLLVYFDRISKNYGHSSERNGCAKQLFVMDSGNIHRLLITGVTICTKFLSDFFYSNSRYAKVGGISLQELNHLELQFLILCDFKLLVSVEEMQKYANLLYKFWNDQ</sequence>